<accession>Q8R9D0</accession>
<keyword id="KW-0067">ATP-binding</keyword>
<keyword id="KW-0238">DNA-binding</keyword>
<keyword id="KW-0255">Endonuclease</keyword>
<keyword id="KW-0378">Hydrolase</keyword>
<keyword id="KW-0540">Nuclease</keyword>
<keyword id="KW-0547">Nucleotide-binding</keyword>
<keyword id="KW-1185">Reference proteome</keyword>
<keyword id="KW-0694">RNA-binding</keyword>
<keyword id="KW-0699">rRNA-binding</keyword>
<proteinExistence type="inferred from homology"/>
<organism>
    <name type="scientific">Caldanaerobacter subterraneus subsp. tengcongensis (strain DSM 15242 / JCM 11007 / NBRC 100824 / MB4)</name>
    <name type="common">Thermoanaerobacter tengcongensis</name>
    <dbReference type="NCBI Taxonomy" id="273068"/>
    <lineage>
        <taxon>Bacteria</taxon>
        <taxon>Bacillati</taxon>
        <taxon>Bacillota</taxon>
        <taxon>Clostridia</taxon>
        <taxon>Thermoanaerobacterales</taxon>
        <taxon>Thermoanaerobacteraceae</taxon>
        <taxon>Caldanaerobacter</taxon>
    </lineage>
</organism>
<gene>
    <name evidence="1" type="primary">mutS2</name>
    <name evidence="1" type="synonym">rqcU</name>
    <name type="ordered locus">TTE1685</name>
</gene>
<feature type="chain" id="PRO_0000115239" description="Endonuclease MutS2">
    <location>
        <begin position="1"/>
        <end position="790"/>
    </location>
</feature>
<feature type="domain" description="Smr" evidence="1">
    <location>
        <begin position="713"/>
        <end position="788"/>
    </location>
</feature>
<feature type="binding site" evidence="1">
    <location>
        <begin position="334"/>
        <end position="341"/>
    </location>
    <ligand>
        <name>ATP</name>
        <dbReference type="ChEBI" id="CHEBI:30616"/>
    </ligand>
</feature>
<sequence length="790" mass="90015">MKGMREKTLKSLEFDKIVKLIANECDSELGREKVFDIEIKKDLKAIEFELDLLNEAVKFIYSYGDISFSFQDIREHVKKAQIDYILYNRELLGIKNFLSLVEEVKAHFKSLYDREDFLLLKEFDKRLVPLKSLKEKIENTVISEDEISDEASPVLKAIRRQKASINEKIKSTLNSIISTRQKELQEPIITMRQGRYVVPVKQEYRNVFKGIIHDQSSTGATLFIEPIQVVDLNNELRELELKEQKEIERILFELSQEVKKNAEAIFKDVEVVSELDFLFAKARYSIKIKASRPELNTSGYVNLKKARHPLIDPEKVVPIDIHIGREFTTLVITGPNTGGKTVTLKTVGLLTLMAMAGINIPAEEKSQISIFEDVFVDIGDEQSIEQSLSTFSSHMTNIVSILKKVNKNSLVLLDELGAGTDPLEGSALAMSILDFLHRTGCRTIATTHYSELKQYALKTKGVENASVEFDVETLRPTYRLIIGIPGRSNAFEISRRLGLSEEIIENAKSYMSGEAIRFEDVIKDVEEKRKDLENAYQEVERLKKEVEVLKEELEKEKRKLESQKDKILKEAKEKAREIIKEAKQTAEEVIKRIKEAEEKEKNKDRAIQEIREKIKKNLEELEEEVLKPKEFSYGKIPDSLKAGQTVYIVPLDQNGIVLSPPDASGNVEVQAGILKMTVHISNLRVKEEQEQEEVKKGYSRFINEKAKSISPSLDVRGMTLDDALLEVEKYIDDAYLAGLNQVTIIHGRGTGVLRTGIAKFLRNSKYVKSFRLGRYGEGGDGVTIVELHSR</sequence>
<protein>
    <recommendedName>
        <fullName evidence="1">Endonuclease MutS2</fullName>
        <ecNumber evidence="1">3.1.-.-</ecNumber>
    </recommendedName>
    <alternativeName>
        <fullName evidence="1">Ribosome-associated protein quality control-upstream factor</fullName>
        <shortName evidence="1">RQC-upstream factor</shortName>
        <shortName evidence="1">RqcU</shortName>
        <ecNumber evidence="1">3.6.4.-</ecNumber>
    </alternativeName>
</protein>
<comment type="function">
    <text evidence="1">Endonuclease that is involved in the suppression of homologous recombination and thus may have a key role in the control of bacterial genetic diversity.</text>
</comment>
<comment type="function">
    <text evidence="1">Acts as a ribosome collision sensor, splitting the ribosome into its 2 subunits. Detects stalled/collided 70S ribosomes which it binds and splits by an ATP-hydrolysis driven conformational change. Acts upstream of the ribosome quality control system (RQC), a ribosome-associated complex that mediates the extraction of incompletely synthesized nascent chains from stalled ribosomes and their subsequent degradation. Probably generates substrates for RQC.</text>
</comment>
<comment type="subunit">
    <text evidence="1">Homodimer. Binds to stalled ribosomes, contacting rRNA.</text>
</comment>
<comment type="similarity">
    <text evidence="1">Belongs to the DNA mismatch repair MutS family. MutS2 subfamily.</text>
</comment>
<reference key="1">
    <citation type="journal article" date="2002" name="Genome Res.">
        <title>A complete sequence of the T. tengcongensis genome.</title>
        <authorList>
            <person name="Bao Q."/>
            <person name="Tian Y."/>
            <person name="Li W."/>
            <person name="Xu Z."/>
            <person name="Xuan Z."/>
            <person name="Hu S."/>
            <person name="Dong W."/>
            <person name="Yang J."/>
            <person name="Chen Y."/>
            <person name="Xue Y."/>
            <person name="Xu Y."/>
            <person name="Lai X."/>
            <person name="Huang L."/>
            <person name="Dong X."/>
            <person name="Ma Y."/>
            <person name="Ling L."/>
            <person name="Tan H."/>
            <person name="Chen R."/>
            <person name="Wang J."/>
            <person name="Yu J."/>
            <person name="Yang H."/>
        </authorList>
    </citation>
    <scope>NUCLEOTIDE SEQUENCE [LARGE SCALE GENOMIC DNA]</scope>
    <source>
        <strain>DSM 15242 / JCM 11007 / NBRC 100824 / MB4</strain>
    </source>
</reference>
<evidence type="ECO:0000255" key="1">
    <source>
        <dbReference type="HAMAP-Rule" id="MF_00092"/>
    </source>
</evidence>
<name>MUTS2_CALS4</name>
<dbReference type="EC" id="3.1.-.-" evidence="1"/>
<dbReference type="EC" id="3.6.4.-" evidence="1"/>
<dbReference type="EMBL" id="AE008691">
    <property type="protein sequence ID" value="AAM24886.1"/>
    <property type="molecule type" value="Genomic_DNA"/>
</dbReference>
<dbReference type="SMR" id="Q8R9D0"/>
<dbReference type="STRING" id="273068.TTE1685"/>
<dbReference type="KEGG" id="tte:TTE1685"/>
<dbReference type="eggNOG" id="COG1193">
    <property type="taxonomic scope" value="Bacteria"/>
</dbReference>
<dbReference type="HOGENOM" id="CLU_011252_2_1_9"/>
<dbReference type="OrthoDB" id="9808166at2"/>
<dbReference type="Proteomes" id="UP000000555">
    <property type="component" value="Chromosome"/>
</dbReference>
<dbReference type="GO" id="GO:0005524">
    <property type="term" value="F:ATP binding"/>
    <property type="evidence" value="ECO:0007669"/>
    <property type="project" value="UniProtKB-UniRule"/>
</dbReference>
<dbReference type="GO" id="GO:0016887">
    <property type="term" value="F:ATP hydrolysis activity"/>
    <property type="evidence" value="ECO:0007669"/>
    <property type="project" value="InterPro"/>
</dbReference>
<dbReference type="GO" id="GO:0140664">
    <property type="term" value="F:ATP-dependent DNA damage sensor activity"/>
    <property type="evidence" value="ECO:0007669"/>
    <property type="project" value="InterPro"/>
</dbReference>
<dbReference type="GO" id="GO:0004519">
    <property type="term" value="F:endonuclease activity"/>
    <property type="evidence" value="ECO:0007669"/>
    <property type="project" value="UniProtKB-UniRule"/>
</dbReference>
<dbReference type="GO" id="GO:0030983">
    <property type="term" value="F:mismatched DNA binding"/>
    <property type="evidence" value="ECO:0007669"/>
    <property type="project" value="InterPro"/>
</dbReference>
<dbReference type="GO" id="GO:0043023">
    <property type="term" value="F:ribosomal large subunit binding"/>
    <property type="evidence" value="ECO:0007669"/>
    <property type="project" value="UniProtKB-UniRule"/>
</dbReference>
<dbReference type="GO" id="GO:0019843">
    <property type="term" value="F:rRNA binding"/>
    <property type="evidence" value="ECO:0007669"/>
    <property type="project" value="UniProtKB-UniRule"/>
</dbReference>
<dbReference type="GO" id="GO:0006298">
    <property type="term" value="P:mismatch repair"/>
    <property type="evidence" value="ECO:0007669"/>
    <property type="project" value="InterPro"/>
</dbReference>
<dbReference type="GO" id="GO:0045910">
    <property type="term" value="P:negative regulation of DNA recombination"/>
    <property type="evidence" value="ECO:0007669"/>
    <property type="project" value="InterPro"/>
</dbReference>
<dbReference type="GO" id="GO:0072344">
    <property type="term" value="P:rescue of stalled ribosome"/>
    <property type="evidence" value="ECO:0007669"/>
    <property type="project" value="UniProtKB-UniRule"/>
</dbReference>
<dbReference type="CDD" id="cd03280">
    <property type="entry name" value="ABC_MutS2"/>
    <property type="match status" value="1"/>
</dbReference>
<dbReference type="FunFam" id="3.40.50.300:FF:000830">
    <property type="entry name" value="Endonuclease MutS2"/>
    <property type="match status" value="1"/>
</dbReference>
<dbReference type="Gene3D" id="3.30.1370.110">
    <property type="match status" value="1"/>
</dbReference>
<dbReference type="Gene3D" id="3.40.50.300">
    <property type="entry name" value="P-loop containing nucleotide triphosphate hydrolases"/>
    <property type="match status" value="1"/>
</dbReference>
<dbReference type="HAMAP" id="MF_00092">
    <property type="entry name" value="MutS2"/>
    <property type="match status" value="1"/>
</dbReference>
<dbReference type="InterPro" id="IPR000432">
    <property type="entry name" value="DNA_mismatch_repair_MutS_C"/>
</dbReference>
<dbReference type="InterPro" id="IPR007696">
    <property type="entry name" value="DNA_mismatch_repair_MutS_core"/>
</dbReference>
<dbReference type="InterPro" id="IPR036187">
    <property type="entry name" value="DNA_mismatch_repair_MutS_sf"/>
</dbReference>
<dbReference type="InterPro" id="IPR046893">
    <property type="entry name" value="MSSS"/>
</dbReference>
<dbReference type="InterPro" id="IPR045076">
    <property type="entry name" value="MutS"/>
</dbReference>
<dbReference type="InterPro" id="IPR005747">
    <property type="entry name" value="MutS2"/>
</dbReference>
<dbReference type="InterPro" id="IPR027417">
    <property type="entry name" value="P-loop_NTPase"/>
</dbReference>
<dbReference type="InterPro" id="IPR002625">
    <property type="entry name" value="Smr_dom"/>
</dbReference>
<dbReference type="InterPro" id="IPR036063">
    <property type="entry name" value="Smr_dom_sf"/>
</dbReference>
<dbReference type="NCBIfam" id="TIGR01069">
    <property type="entry name" value="mutS2"/>
    <property type="match status" value="1"/>
</dbReference>
<dbReference type="PANTHER" id="PTHR48466:SF2">
    <property type="entry name" value="OS10G0509000 PROTEIN"/>
    <property type="match status" value="1"/>
</dbReference>
<dbReference type="PANTHER" id="PTHR48466">
    <property type="entry name" value="OS10G0509000 PROTEIN-RELATED"/>
    <property type="match status" value="1"/>
</dbReference>
<dbReference type="Pfam" id="PF20297">
    <property type="entry name" value="MSSS"/>
    <property type="match status" value="1"/>
</dbReference>
<dbReference type="Pfam" id="PF00488">
    <property type="entry name" value="MutS_V"/>
    <property type="match status" value="1"/>
</dbReference>
<dbReference type="Pfam" id="PF01713">
    <property type="entry name" value="Smr"/>
    <property type="match status" value="1"/>
</dbReference>
<dbReference type="PIRSF" id="PIRSF005814">
    <property type="entry name" value="MutS_YshD"/>
    <property type="match status" value="1"/>
</dbReference>
<dbReference type="SMART" id="SM00534">
    <property type="entry name" value="MUTSac"/>
    <property type="match status" value="1"/>
</dbReference>
<dbReference type="SMART" id="SM00533">
    <property type="entry name" value="MUTSd"/>
    <property type="match status" value="1"/>
</dbReference>
<dbReference type="SMART" id="SM00463">
    <property type="entry name" value="SMR"/>
    <property type="match status" value="1"/>
</dbReference>
<dbReference type="SUPFAM" id="SSF48334">
    <property type="entry name" value="DNA repair protein MutS, domain III"/>
    <property type="match status" value="1"/>
</dbReference>
<dbReference type="SUPFAM" id="SSF52540">
    <property type="entry name" value="P-loop containing nucleoside triphosphate hydrolases"/>
    <property type="match status" value="1"/>
</dbReference>
<dbReference type="SUPFAM" id="SSF160443">
    <property type="entry name" value="SMR domain-like"/>
    <property type="match status" value="1"/>
</dbReference>
<dbReference type="PROSITE" id="PS00486">
    <property type="entry name" value="DNA_MISMATCH_REPAIR_2"/>
    <property type="match status" value="1"/>
</dbReference>
<dbReference type="PROSITE" id="PS50828">
    <property type="entry name" value="SMR"/>
    <property type="match status" value="1"/>
</dbReference>